<sequence>MYAVFQSGGKQHRVSEGQTLRLEKLDVETGATVEFDNVLMIANGEEITVGAPLVAGGKVTAEVVQHGRGDKVKIVKFRRRKHSRKQQGHRQWFTEVKITGISA</sequence>
<feature type="chain" id="PRO_1000143869" description="Large ribosomal subunit protein bL21">
    <location>
        <begin position="1"/>
        <end position="103"/>
    </location>
</feature>
<organism>
    <name type="scientific">Aliivibrio fischeri (strain MJ11)</name>
    <name type="common">Vibrio fischeri</name>
    <dbReference type="NCBI Taxonomy" id="388396"/>
    <lineage>
        <taxon>Bacteria</taxon>
        <taxon>Pseudomonadati</taxon>
        <taxon>Pseudomonadota</taxon>
        <taxon>Gammaproteobacteria</taxon>
        <taxon>Vibrionales</taxon>
        <taxon>Vibrionaceae</taxon>
        <taxon>Aliivibrio</taxon>
    </lineage>
</organism>
<accession>B5FGF7</accession>
<comment type="function">
    <text evidence="1">This protein binds to 23S rRNA in the presence of protein L20.</text>
</comment>
<comment type="subunit">
    <text evidence="1">Part of the 50S ribosomal subunit. Contacts protein L20.</text>
</comment>
<comment type="similarity">
    <text evidence="1">Belongs to the bacterial ribosomal protein bL21 family.</text>
</comment>
<dbReference type="EMBL" id="CP001139">
    <property type="protein sequence ID" value="ACH64867.1"/>
    <property type="molecule type" value="Genomic_DNA"/>
</dbReference>
<dbReference type="RefSeq" id="WP_005417305.1">
    <property type="nucleotide sequence ID" value="NC_011184.1"/>
</dbReference>
<dbReference type="SMR" id="B5FGF7"/>
<dbReference type="GeneID" id="54162899"/>
<dbReference type="KEGG" id="vfm:VFMJ11_0266"/>
<dbReference type="HOGENOM" id="CLU_061463_3_3_6"/>
<dbReference type="Proteomes" id="UP000001857">
    <property type="component" value="Chromosome I"/>
</dbReference>
<dbReference type="GO" id="GO:0005737">
    <property type="term" value="C:cytoplasm"/>
    <property type="evidence" value="ECO:0007669"/>
    <property type="project" value="UniProtKB-ARBA"/>
</dbReference>
<dbReference type="GO" id="GO:1990904">
    <property type="term" value="C:ribonucleoprotein complex"/>
    <property type="evidence" value="ECO:0007669"/>
    <property type="project" value="UniProtKB-KW"/>
</dbReference>
<dbReference type="GO" id="GO:0005840">
    <property type="term" value="C:ribosome"/>
    <property type="evidence" value="ECO:0007669"/>
    <property type="project" value="UniProtKB-KW"/>
</dbReference>
<dbReference type="GO" id="GO:0019843">
    <property type="term" value="F:rRNA binding"/>
    <property type="evidence" value="ECO:0007669"/>
    <property type="project" value="UniProtKB-UniRule"/>
</dbReference>
<dbReference type="GO" id="GO:0003735">
    <property type="term" value="F:structural constituent of ribosome"/>
    <property type="evidence" value="ECO:0007669"/>
    <property type="project" value="InterPro"/>
</dbReference>
<dbReference type="GO" id="GO:0006412">
    <property type="term" value="P:translation"/>
    <property type="evidence" value="ECO:0007669"/>
    <property type="project" value="UniProtKB-UniRule"/>
</dbReference>
<dbReference type="HAMAP" id="MF_01363">
    <property type="entry name" value="Ribosomal_bL21"/>
    <property type="match status" value="1"/>
</dbReference>
<dbReference type="InterPro" id="IPR028909">
    <property type="entry name" value="bL21-like"/>
</dbReference>
<dbReference type="InterPro" id="IPR036164">
    <property type="entry name" value="bL21-like_sf"/>
</dbReference>
<dbReference type="InterPro" id="IPR001787">
    <property type="entry name" value="Ribosomal_bL21"/>
</dbReference>
<dbReference type="InterPro" id="IPR018258">
    <property type="entry name" value="Ribosomal_bL21_CS"/>
</dbReference>
<dbReference type="NCBIfam" id="TIGR00061">
    <property type="entry name" value="L21"/>
    <property type="match status" value="1"/>
</dbReference>
<dbReference type="PANTHER" id="PTHR21349">
    <property type="entry name" value="50S RIBOSOMAL PROTEIN L21"/>
    <property type="match status" value="1"/>
</dbReference>
<dbReference type="PANTHER" id="PTHR21349:SF0">
    <property type="entry name" value="LARGE RIBOSOMAL SUBUNIT PROTEIN BL21M"/>
    <property type="match status" value="1"/>
</dbReference>
<dbReference type="Pfam" id="PF00829">
    <property type="entry name" value="Ribosomal_L21p"/>
    <property type="match status" value="1"/>
</dbReference>
<dbReference type="SUPFAM" id="SSF141091">
    <property type="entry name" value="L21p-like"/>
    <property type="match status" value="1"/>
</dbReference>
<dbReference type="PROSITE" id="PS01169">
    <property type="entry name" value="RIBOSOMAL_L21"/>
    <property type="match status" value="1"/>
</dbReference>
<protein>
    <recommendedName>
        <fullName evidence="1">Large ribosomal subunit protein bL21</fullName>
    </recommendedName>
    <alternativeName>
        <fullName evidence="2">50S ribosomal protein L21</fullName>
    </alternativeName>
</protein>
<reference key="1">
    <citation type="submission" date="2008-08" db="EMBL/GenBank/DDBJ databases">
        <title>Complete sequence of Vibrio fischeri strain MJ11.</title>
        <authorList>
            <person name="Mandel M.J."/>
            <person name="Stabb E.V."/>
            <person name="Ruby E.G."/>
            <person name="Ferriera S."/>
            <person name="Johnson J."/>
            <person name="Kravitz S."/>
            <person name="Beeson K."/>
            <person name="Sutton G."/>
            <person name="Rogers Y.-H."/>
            <person name="Friedman R."/>
            <person name="Frazier M."/>
            <person name="Venter J.C."/>
        </authorList>
    </citation>
    <scope>NUCLEOTIDE SEQUENCE [LARGE SCALE GENOMIC DNA]</scope>
    <source>
        <strain>MJ11</strain>
    </source>
</reference>
<gene>
    <name evidence="1" type="primary">rplU</name>
    <name type="ordered locus">VFMJ11_0266</name>
</gene>
<proteinExistence type="inferred from homology"/>
<evidence type="ECO:0000255" key="1">
    <source>
        <dbReference type="HAMAP-Rule" id="MF_01363"/>
    </source>
</evidence>
<evidence type="ECO:0000305" key="2"/>
<keyword id="KW-0687">Ribonucleoprotein</keyword>
<keyword id="KW-0689">Ribosomal protein</keyword>
<keyword id="KW-0694">RNA-binding</keyword>
<keyword id="KW-0699">rRNA-binding</keyword>
<name>RL21_ALIFM</name>